<accession>Q215E8</accession>
<dbReference type="EMBL" id="CP000301">
    <property type="protein sequence ID" value="ABD87988.1"/>
    <property type="molecule type" value="Genomic_DNA"/>
</dbReference>
<dbReference type="SMR" id="Q215E8"/>
<dbReference type="STRING" id="316056.RPC_2437"/>
<dbReference type="KEGG" id="rpc:RPC_2437"/>
<dbReference type="eggNOG" id="COG0264">
    <property type="taxonomic scope" value="Bacteria"/>
</dbReference>
<dbReference type="HOGENOM" id="CLU_047155_2_0_5"/>
<dbReference type="OrthoDB" id="9808348at2"/>
<dbReference type="GO" id="GO:0005737">
    <property type="term" value="C:cytoplasm"/>
    <property type="evidence" value="ECO:0007669"/>
    <property type="project" value="UniProtKB-SubCell"/>
</dbReference>
<dbReference type="GO" id="GO:0003746">
    <property type="term" value="F:translation elongation factor activity"/>
    <property type="evidence" value="ECO:0007669"/>
    <property type="project" value="UniProtKB-UniRule"/>
</dbReference>
<dbReference type="CDD" id="cd14275">
    <property type="entry name" value="UBA_EF-Ts"/>
    <property type="match status" value="1"/>
</dbReference>
<dbReference type="FunFam" id="1.10.8.10:FF:000001">
    <property type="entry name" value="Elongation factor Ts"/>
    <property type="match status" value="1"/>
</dbReference>
<dbReference type="Gene3D" id="1.10.286.20">
    <property type="match status" value="1"/>
</dbReference>
<dbReference type="Gene3D" id="1.10.8.10">
    <property type="entry name" value="DNA helicase RuvA subunit, C-terminal domain"/>
    <property type="match status" value="1"/>
</dbReference>
<dbReference type="Gene3D" id="3.30.479.20">
    <property type="entry name" value="Elongation factor Ts, dimerisation domain"/>
    <property type="match status" value="2"/>
</dbReference>
<dbReference type="HAMAP" id="MF_00050">
    <property type="entry name" value="EF_Ts"/>
    <property type="match status" value="1"/>
</dbReference>
<dbReference type="InterPro" id="IPR036402">
    <property type="entry name" value="EF-Ts_dimer_sf"/>
</dbReference>
<dbReference type="InterPro" id="IPR001816">
    <property type="entry name" value="Transl_elong_EFTs/EF1B"/>
</dbReference>
<dbReference type="InterPro" id="IPR014039">
    <property type="entry name" value="Transl_elong_EFTs/EF1B_dimer"/>
</dbReference>
<dbReference type="InterPro" id="IPR018101">
    <property type="entry name" value="Transl_elong_Ts_CS"/>
</dbReference>
<dbReference type="InterPro" id="IPR009060">
    <property type="entry name" value="UBA-like_sf"/>
</dbReference>
<dbReference type="NCBIfam" id="TIGR00116">
    <property type="entry name" value="tsf"/>
    <property type="match status" value="1"/>
</dbReference>
<dbReference type="PANTHER" id="PTHR11741">
    <property type="entry name" value="ELONGATION FACTOR TS"/>
    <property type="match status" value="1"/>
</dbReference>
<dbReference type="PANTHER" id="PTHR11741:SF0">
    <property type="entry name" value="ELONGATION FACTOR TS, MITOCHONDRIAL"/>
    <property type="match status" value="1"/>
</dbReference>
<dbReference type="Pfam" id="PF00889">
    <property type="entry name" value="EF_TS"/>
    <property type="match status" value="1"/>
</dbReference>
<dbReference type="SUPFAM" id="SSF54713">
    <property type="entry name" value="Elongation factor Ts (EF-Ts), dimerisation domain"/>
    <property type="match status" value="2"/>
</dbReference>
<dbReference type="SUPFAM" id="SSF46934">
    <property type="entry name" value="UBA-like"/>
    <property type="match status" value="1"/>
</dbReference>
<dbReference type="PROSITE" id="PS01126">
    <property type="entry name" value="EF_TS_1"/>
    <property type="match status" value="1"/>
</dbReference>
<dbReference type="PROSITE" id="PS01127">
    <property type="entry name" value="EF_TS_2"/>
    <property type="match status" value="1"/>
</dbReference>
<feature type="chain" id="PRO_0000241518" description="Elongation factor Ts">
    <location>
        <begin position="1"/>
        <end position="308"/>
    </location>
</feature>
<feature type="region of interest" description="Involved in Mg(2+) ion dislocation from EF-Tu" evidence="1">
    <location>
        <begin position="80"/>
        <end position="83"/>
    </location>
</feature>
<name>EFTS_RHOPB</name>
<protein>
    <recommendedName>
        <fullName evidence="1">Elongation factor Ts</fullName>
        <shortName evidence="1">EF-Ts</shortName>
    </recommendedName>
</protein>
<evidence type="ECO:0000255" key="1">
    <source>
        <dbReference type="HAMAP-Rule" id="MF_00050"/>
    </source>
</evidence>
<sequence length="308" mass="32392">MATITAAMVKDLRETTGVGMMDCKQALTENDGDMQAAIDWLRKKGLSKAAKKAGRVAAEGLIGALTDKTKGVLVEVNSETDFVARNEQFQGLVKMIAQVALKVGADLDKINAAPVGSSTVATAIADAIATIGENMTLRRAAVLEVGQGLVASYVHNAVTDGAGKLGVIVALESAGKTDELAALGKQLSMHVASANPQALEPAGLDPDVVRREKDVMADKYRQQGKPEAMIEKIVENGLKTYYKEVCLLEQAFIFDEKGKSVAQAVKEAEGRVGAPIKVTGFVRYALGEGIEKQTSDFAAEVAAASGQK</sequence>
<keyword id="KW-0963">Cytoplasm</keyword>
<keyword id="KW-0251">Elongation factor</keyword>
<keyword id="KW-0648">Protein biosynthesis</keyword>
<organism>
    <name type="scientific">Rhodopseudomonas palustris (strain BisB18)</name>
    <dbReference type="NCBI Taxonomy" id="316056"/>
    <lineage>
        <taxon>Bacteria</taxon>
        <taxon>Pseudomonadati</taxon>
        <taxon>Pseudomonadota</taxon>
        <taxon>Alphaproteobacteria</taxon>
        <taxon>Hyphomicrobiales</taxon>
        <taxon>Nitrobacteraceae</taxon>
        <taxon>Rhodopseudomonas</taxon>
    </lineage>
</organism>
<proteinExistence type="inferred from homology"/>
<gene>
    <name evidence="1" type="primary">tsf</name>
    <name type="ordered locus">RPC_2437</name>
</gene>
<comment type="function">
    <text evidence="1">Associates with the EF-Tu.GDP complex and induces the exchange of GDP to GTP. It remains bound to the aminoacyl-tRNA.EF-Tu.GTP complex up to the GTP hydrolysis stage on the ribosome.</text>
</comment>
<comment type="subcellular location">
    <subcellularLocation>
        <location evidence="1">Cytoplasm</location>
    </subcellularLocation>
</comment>
<comment type="similarity">
    <text evidence="1">Belongs to the EF-Ts family.</text>
</comment>
<reference key="1">
    <citation type="submission" date="2006-03" db="EMBL/GenBank/DDBJ databases">
        <title>Complete sequence of Rhodopseudomonas palustris BisB18.</title>
        <authorList>
            <consortium name="US DOE Joint Genome Institute"/>
            <person name="Copeland A."/>
            <person name="Lucas S."/>
            <person name="Lapidus A."/>
            <person name="Barry K."/>
            <person name="Detter J.C."/>
            <person name="Glavina del Rio T."/>
            <person name="Hammon N."/>
            <person name="Israni S."/>
            <person name="Dalin E."/>
            <person name="Tice H."/>
            <person name="Pitluck S."/>
            <person name="Chain P."/>
            <person name="Malfatti S."/>
            <person name="Shin M."/>
            <person name="Vergez L."/>
            <person name="Schmutz J."/>
            <person name="Larimer F."/>
            <person name="Land M."/>
            <person name="Hauser L."/>
            <person name="Pelletier D.A."/>
            <person name="Kyrpides N."/>
            <person name="Anderson I."/>
            <person name="Oda Y."/>
            <person name="Harwood C.S."/>
            <person name="Richardson P."/>
        </authorList>
    </citation>
    <scope>NUCLEOTIDE SEQUENCE [LARGE SCALE GENOMIC DNA]</scope>
    <source>
        <strain>BisB18</strain>
    </source>
</reference>